<evidence type="ECO:0000250" key="1">
    <source>
        <dbReference type="UniProtKB" id="P0A9W6"/>
    </source>
</evidence>
<evidence type="ECO:0000305" key="2"/>
<protein>
    <recommendedName>
        <fullName evidence="1">Acid stress protein IbaG</fullName>
    </recommendedName>
</protein>
<gene>
    <name evidence="1" type="primary">ibaG</name>
    <name type="synonym">yrbA</name>
    <name type="ordered locus">c3948</name>
</gene>
<name>IBAG_ECOL6</name>
<feature type="chain" id="PRO_0000201219" description="Acid stress protein IbaG">
    <location>
        <begin position="1"/>
        <end position="84"/>
    </location>
</feature>
<comment type="function">
    <text evidence="1">Involved in cell resistance against acid stress.</text>
</comment>
<comment type="similarity">
    <text evidence="2">Belongs to the BolA/IbaG family.</text>
</comment>
<comment type="sequence caution" evidence="2">
    <conflict type="erroneous initiation">
        <sequence resource="EMBL-CDS" id="AAN82388"/>
    </conflict>
    <text>Extended N-terminus.</text>
</comment>
<organism>
    <name type="scientific">Escherichia coli O6:H1 (strain CFT073 / ATCC 700928 / UPEC)</name>
    <dbReference type="NCBI Taxonomy" id="199310"/>
    <lineage>
        <taxon>Bacteria</taxon>
        <taxon>Pseudomonadati</taxon>
        <taxon>Pseudomonadota</taxon>
        <taxon>Gammaproteobacteria</taxon>
        <taxon>Enterobacterales</taxon>
        <taxon>Enterobacteriaceae</taxon>
        <taxon>Escherichia</taxon>
    </lineage>
</organism>
<reference key="1">
    <citation type="journal article" date="2002" name="Proc. Natl. Acad. Sci. U.S.A.">
        <title>Extensive mosaic structure revealed by the complete genome sequence of uropathogenic Escherichia coli.</title>
        <authorList>
            <person name="Welch R.A."/>
            <person name="Burland V."/>
            <person name="Plunkett G. III"/>
            <person name="Redford P."/>
            <person name="Roesch P."/>
            <person name="Rasko D."/>
            <person name="Buckles E.L."/>
            <person name="Liou S.-R."/>
            <person name="Boutin A."/>
            <person name="Hackett J."/>
            <person name="Stroud D."/>
            <person name="Mayhew G.F."/>
            <person name="Rose D.J."/>
            <person name="Zhou S."/>
            <person name="Schwartz D.C."/>
            <person name="Perna N.T."/>
            <person name="Mobley H.L.T."/>
            <person name="Donnenberg M.S."/>
            <person name="Blattner F.R."/>
        </authorList>
    </citation>
    <scope>NUCLEOTIDE SEQUENCE [LARGE SCALE GENOMIC DNA]</scope>
    <source>
        <strain>CFT073 / ATCC 700928 / UPEC</strain>
    </source>
</reference>
<dbReference type="EMBL" id="AE014075">
    <property type="protein sequence ID" value="AAN82388.1"/>
    <property type="status" value="ALT_INIT"/>
    <property type="molecule type" value="Genomic_DNA"/>
</dbReference>
<dbReference type="RefSeq" id="WP_000429656.1">
    <property type="nucleotide sequence ID" value="NZ_CP051263.1"/>
</dbReference>
<dbReference type="BMRB" id="P0A9W7"/>
<dbReference type="SMR" id="P0A9W7"/>
<dbReference type="STRING" id="199310.c3948"/>
<dbReference type="GeneID" id="93778791"/>
<dbReference type="KEGG" id="ecc:c3948"/>
<dbReference type="eggNOG" id="COG5007">
    <property type="taxonomic scope" value="Bacteria"/>
</dbReference>
<dbReference type="HOGENOM" id="CLU_109462_4_1_6"/>
<dbReference type="Proteomes" id="UP000001410">
    <property type="component" value="Chromosome"/>
</dbReference>
<dbReference type="FunFam" id="3.30.300.90:FF:000002">
    <property type="entry name" value="Acid stress protein IbaG"/>
    <property type="match status" value="1"/>
</dbReference>
<dbReference type="Gene3D" id="3.30.300.90">
    <property type="entry name" value="BolA-like"/>
    <property type="match status" value="1"/>
</dbReference>
<dbReference type="InterPro" id="IPR002634">
    <property type="entry name" value="BolA"/>
</dbReference>
<dbReference type="InterPro" id="IPR036065">
    <property type="entry name" value="BolA-like_sf"/>
</dbReference>
<dbReference type="InterPro" id="IPR050961">
    <property type="entry name" value="BolA/IbaG_stress_morph_reg"/>
</dbReference>
<dbReference type="PANTHER" id="PTHR46229:SF4">
    <property type="entry name" value="ACID STRESS PROTEIN IBAG"/>
    <property type="match status" value="1"/>
</dbReference>
<dbReference type="PANTHER" id="PTHR46229">
    <property type="entry name" value="BOLA TRANSCRIPTION REGULATOR"/>
    <property type="match status" value="1"/>
</dbReference>
<dbReference type="Pfam" id="PF01722">
    <property type="entry name" value="BolA"/>
    <property type="match status" value="1"/>
</dbReference>
<dbReference type="PIRSF" id="PIRSF003113">
    <property type="entry name" value="BolA"/>
    <property type="match status" value="1"/>
</dbReference>
<dbReference type="SUPFAM" id="SSF82657">
    <property type="entry name" value="BolA-like"/>
    <property type="match status" value="1"/>
</dbReference>
<keyword id="KW-1185">Reference proteome</keyword>
<keyword id="KW-0346">Stress response</keyword>
<sequence length="84" mass="9452">MENNEIQSVLMNALSLQEVHVSGDGSHFQVIAVGELFDGMSRVKKQQTVYGPLMEYIADNRIHAVSIKAYTPAEWARDRKLNGF</sequence>
<accession>P0A9W7</accession>
<accession>P43781</accession>
<accession>P76672</accession>
<proteinExistence type="inferred from homology"/>